<keyword id="KW-1185">Reference proteome</keyword>
<accession>O13549</accession>
<accession>A0A0B7P1T6</accession>
<feature type="chain" id="PRO_0000299780" description="Uncharacterized protein VPS63">
    <location>
        <begin position="1"/>
        <end position="108"/>
    </location>
</feature>
<protein>
    <recommendedName>
        <fullName evidence="3">Uncharacterized protein VPS63</fullName>
    </recommendedName>
</protein>
<evidence type="ECO:0000269" key="1">
    <source>
    </source>
</evidence>
<evidence type="ECO:0000303" key="2">
    <source>
    </source>
</evidence>
<evidence type="ECO:0000305" key="3"/>
<evidence type="ECO:0000312" key="4">
    <source>
        <dbReference type="SGD" id="S000004251"/>
    </source>
</evidence>
<proteinExistence type="evidence at protein level"/>
<gene>
    <name evidence="2" type="primary">VPS63</name>
    <name evidence="4" type="ordered locus">YLR261C</name>
</gene>
<dbReference type="EMBL" id="U17244">
    <property type="protein sequence ID" value="AAB67385.1"/>
    <property type="molecule type" value="Genomic_DNA"/>
</dbReference>
<dbReference type="EMBL" id="BK006945">
    <property type="protein sequence ID" value="DAA64694.1"/>
    <property type="molecule type" value="Genomic_DNA"/>
</dbReference>
<dbReference type="PIR" id="S69302">
    <property type="entry name" value="S69302"/>
</dbReference>
<dbReference type="RefSeq" id="NP_013362.1">
    <property type="nucleotide sequence ID" value="NM_001182148.1"/>
</dbReference>
<dbReference type="DIP" id="DIP-4379N"/>
<dbReference type="FunCoup" id="O13549">
    <property type="interactions" value="35"/>
</dbReference>
<dbReference type="STRING" id="4932.YLR261C"/>
<dbReference type="PaxDb" id="4932-YLR261C"/>
<dbReference type="EnsemblFungi" id="YLR261C_mRNA">
    <property type="protein sequence ID" value="YLR261C"/>
    <property type="gene ID" value="YLR261C"/>
</dbReference>
<dbReference type="GeneID" id="850965"/>
<dbReference type="KEGG" id="sce:YLR261C"/>
<dbReference type="AGR" id="SGD:S000004251"/>
<dbReference type="SGD" id="S000004251">
    <property type="gene designation" value="VPS63"/>
</dbReference>
<dbReference type="VEuPathDB" id="FungiDB:YLR261C"/>
<dbReference type="HOGENOM" id="CLU_2199048_0_0_1"/>
<dbReference type="InParanoid" id="O13549"/>
<dbReference type="BioGRID-ORCS" id="850965">
    <property type="hits" value="0 hits in 10 CRISPR screens"/>
</dbReference>
<dbReference type="PRO" id="PR:O13549"/>
<dbReference type="Proteomes" id="UP000002311">
    <property type="component" value="Chromosome XII"/>
</dbReference>
<dbReference type="RNAct" id="O13549">
    <property type="molecule type" value="protein"/>
</dbReference>
<dbReference type="GO" id="GO:0006623">
    <property type="term" value="P:protein targeting to vacuole"/>
    <property type="evidence" value="ECO:0007001"/>
    <property type="project" value="SGD"/>
</dbReference>
<sequence length="108" mass="12919">MKEVTKMLYCALLVTKVIYQMKGKSQPKRERKKQNYWVLKSLWKRPQRQAIMSKLYSKRLPNRCLNFKTASQLLWIAKMQIVQTKINRESLIFLQQRSRNKALVSVST</sequence>
<comment type="disruption phenotype">
    <text evidence="1">Deletion causes a vacuolar protein sorting defect.</text>
</comment>
<name>VPS63_YEAST</name>
<reference key="1">
    <citation type="journal article" date="1997" name="Nature">
        <title>The nucleotide sequence of Saccharomyces cerevisiae chromosome XII.</title>
        <authorList>
            <person name="Johnston M."/>
            <person name="Hillier L.W."/>
            <person name="Riles L."/>
            <person name="Albermann K."/>
            <person name="Andre B."/>
            <person name="Ansorge W."/>
            <person name="Benes V."/>
            <person name="Brueckner M."/>
            <person name="Delius H."/>
            <person name="Dubois E."/>
            <person name="Duesterhoeft A."/>
            <person name="Entian K.-D."/>
            <person name="Floeth M."/>
            <person name="Goffeau A."/>
            <person name="Hebling U."/>
            <person name="Heumann K."/>
            <person name="Heuss-Neitzel D."/>
            <person name="Hilbert H."/>
            <person name="Hilger F."/>
            <person name="Kleine K."/>
            <person name="Koetter P."/>
            <person name="Louis E.J."/>
            <person name="Messenguy F."/>
            <person name="Mewes H.-W."/>
            <person name="Miosga T."/>
            <person name="Moestl D."/>
            <person name="Mueller-Auer S."/>
            <person name="Nentwich U."/>
            <person name="Obermaier B."/>
            <person name="Piravandi E."/>
            <person name="Pohl T.M."/>
            <person name="Portetelle D."/>
            <person name="Purnelle B."/>
            <person name="Rechmann S."/>
            <person name="Rieger M."/>
            <person name="Rinke M."/>
            <person name="Rose M."/>
            <person name="Scharfe M."/>
            <person name="Scherens B."/>
            <person name="Scholler P."/>
            <person name="Schwager C."/>
            <person name="Schwarz S."/>
            <person name="Underwood A.P."/>
            <person name="Urrestarazu L.A."/>
            <person name="Vandenbol M."/>
            <person name="Verhasselt P."/>
            <person name="Vierendeels F."/>
            <person name="Voet M."/>
            <person name="Volckaert G."/>
            <person name="Voss H."/>
            <person name="Wambutt R."/>
            <person name="Wedler E."/>
            <person name="Wedler H."/>
            <person name="Zimmermann F.K."/>
            <person name="Zollner A."/>
            <person name="Hani J."/>
            <person name="Hoheisel J.D."/>
        </authorList>
    </citation>
    <scope>NUCLEOTIDE SEQUENCE [LARGE SCALE GENOMIC DNA]</scope>
    <source>
        <strain>ATCC 204508 / S288c</strain>
    </source>
</reference>
<reference key="2">
    <citation type="journal article" date="2014" name="G3 (Bethesda)">
        <title>The reference genome sequence of Saccharomyces cerevisiae: Then and now.</title>
        <authorList>
            <person name="Engel S.R."/>
            <person name="Dietrich F.S."/>
            <person name="Fisk D.G."/>
            <person name="Binkley G."/>
            <person name="Balakrishnan R."/>
            <person name="Costanzo M.C."/>
            <person name="Dwight S.S."/>
            <person name="Hitz B.C."/>
            <person name="Karra K."/>
            <person name="Nash R.S."/>
            <person name="Weng S."/>
            <person name="Wong E.D."/>
            <person name="Lloyd P."/>
            <person name="Skrzypek M.S."/>
            <person name="Miyasato S.R."/>
            <person name="Simison M."/>
            <person name="Cherry J.M."/>
        </authorList>
    </citation>
    <scope>GENOME REANNOTATION</scope>
    <source>
        <strain>ATCC 204508 / S288c</strain>
    </source>
</reference>
<reference key="3">
    <citation type="journal article" date="2002" name="Mol. Biol. Cell">
        <title>Genomic screen for vacuolar protein sorting genes in Saccharomyces cerevisiae.</title>
        <authorList>
            <person name="Bonangelino C.J."/>
            <person name="Chavez E.M."/>
            <person name="Bonifacino J.S."/>
        </authorList>
    </citation>
    <scope>DISRUPTION PHENOTYPE</scope>
</reference>
<reference key="4">
    <citation type="journal article" date="2011" name="Mol. Biochem. Parasitol.">
        <title>Plasmodium falciparum enolase complements yeast enolase functions and associates with the parasite food vacuole.</title>
        <authorList>
            <person name="Das S."/>
            <person name="Shevade S."/>
            <person name="LaCount D.J."/>
            <person name="Jarori G.K."/>
        </authorList>
    </citation>
    <scope>IDENTIFICATION BY MASS SPECTROMETRY</scope>
</reference>
<organism>
    <name type="scientific">Saccharomyces cerevisiae (strain ATCC 204508 / S288c)</name>
    <name type="common">Baker's yeast</name>
    <dbReference type="NCBI Taxonomy" id="559292"/>
    <lineage>
        <taxon>Eukaryota</taxon>
        <taxon>Fungi</taxon>
        <taxon>Dikarya</taxon>
        <taxon>Ascomycota</taxon>
        <taxon>Saccharomycotina</taxon>
        <taxon>Saccharomycetes</taxon>
        <taxon>Saccharomycetales</taxon>
        <taxon>Saccharomycetaceae</taxon>
        <taxon>Saccharomyces</taxon>
    </lineage>
</organism>